<proteinExistence type="inferred from homology"/>
<organism>
    <name type="scientific">Bacillus cereus (strain ATCC 14579 / DSM 31 / CCUG 7414 / JCM 2152 / NBRC 15305 / NCIMB 9373 / NCTC 2599 / NRRL B-3711)</name>
    <dbReference type="NCBI Taxonomy" id="226900"/>
    <lineage>
        <taxon>Bacteria</taxon>
        <taxon>Bacillati</taxon>
        <taxon>Bacillota</taxon>
        <taxon>Bacilli</taxon>
        <taxon>Bacillales</taxon>
        <taxon>Bacillaceae</taxon>
        <taxon>Bacillus</taxon>
        <taxon>Bacillus cereus group</taxon>
    </lineage>
</organism>
<gene>
    <name evidence="1" type="primary">gatB</name>
    <name type="ordered locus">BC_0352</name>
</gene>
<reference key="1">
    <citation type="journal article" date="2003" name="Nature">
        <title>Genome sequence of Bacillus cereus and comparative analysis with Bacillus anthracis.</title>
        <authorList>
            <person name="Ivanova N."/>
            <person name="Sorokin A."/>
            <person name="Anderson I."/>
            <person name="Galleron N."/>
            <person name="Candelon B."/>
            <person name="Kapatral V."/>
            <person name="Bhattacharyya A."/>
            <person name="Reznik G."/>
            <person name="Mikhailova N."/>
            <person name="Lapidus A."/>
            <person name="Chu L."/>
            <person name="Mazur M."/>
            <person name="Goltsman E."/>
            <person name="Larsen N."/>
            <person name="D'Souza M."/>
            <person name="Walunas T."/>
            <person name="Grechkin Y."/>
            <person name="Pusch G."/>
            <person name="Haselkorn R."/>
            <person name="Fonstein M."/>
            <person name="Ehrlich S.D."/>
            <person name="Overbeek R."/>
            <person name="Kyrpides N.C."/>
        </authorList>
    </citation>
    <scope>NUCLEOTIDE SEQUENCE [LARGE SCALE GENOMIC DNA]</scope>
    <source>
        <strain>ATCC 14579 / DSM 31 / CCUG 7414 / JCM 2152 / NBRC 15305 / NCIMB 9373 / NCTC 2599 / NRRL B-3711</strain>
    </source>
</reference>
<name>GATB_BACCR</name>
<dbReference type="EC" id="6.3.5.-" evidence="1"/>
<dbReference type="EMBL" id="AE016877">
    <property type="protein sequence ID" value="AAP07392.1"/>
    <property type="molecule type" value="Genomic_DNA"/>
</dbReference>
<dbReference type="RefSeq" id="NP_830191.1">
    <property type="nucleotide sequence ID" value="NC_004722.1"/>
</dbReference>
<dbReference type="RefSeq" id="WP_001047685.1">
    <property type="nucleotide sequence ID" value="NZ_CP138336.1"/>
</dbReference>
<dbReference type="SMR" id="Q81IN2"/>
<dbReference type="STRING" id="226900.BC_0352"/>
<dbReference type="GeneID" id="93010703"/>
<dbReference type="KEGG" id="bce:BC0352"/>
<dbReference type="PATRIC" id="fig|226900.8.peg.323"/>
<dbReference type="HOGENOM" id="CLU_019240_0_0_9"/>
<dbReference type="OrthoDB" id="9804078at2"/>
<dbReference type="Proteomes" id="UP000001417">
    <property type="component" value="Chromosome"/>
</dbReference>
<dbReference type="GO" id="GO:0050566">
    <property type="term" value="F:asparaginyl-tRNA synthase (glutamine-hydrolyzing) activity"/>
    <property type="evidence" value="ECO:0007669"/>
    <property type="project" value="RHEA"/>
</dbReference>
<dbReference type="GO" id="GO:0005524">
    <property type="term" value="F:ATP binding"/>
    <property type="evidence" value="ECO:0007669"/>
    <property type="project" value="UniProtKB-KW"/>
</dbReference>
<dbReference type="GO" id="GO:0050567">
    <property type="term" value="F:glutaminyl-tRNA synthase (glutamine-hydrolyzing) activity"/>
    <property type="evidence" value="ECO:0000318"/>
    <property type="project" value="GO_Central"/>
</dbReference>
<dbReference type="GO" id="GO:0070681">
    <property type="term" value="P:glutaminyl-tRNAGln biosynthesis via transamidation"/>
    <property type="evidence" value="ECO:0000318"/>
    <property type="project" value="GO_Central"/>
</dbReference>
<dbReference type="GO" id="GO:0006412">
    <property type="term" value="P:translation"/>
    <property type="evidence" value="ECO:0007669"/>
    <property type="project" value="UniProtKB-UniRule"/>
</dbReference>
<dbReference type="FunFam" id="1.10.10.410:FF:000001">
    <property type="entry name" value="Aspartyl/glutamyl-tRNA(Asn/Gln) amidotransferase subunit B"/>
    <property type="match status" value="1"/>
</dbReference>
<dbReference type="FunFam" id="1.10.150.380:FF:000001">
    <property type="entry name" value="Aspartyl/glutamyl-tRNA(Asn/Gln) amidotransferase subunit B"/>
    <property type="match status" value="1"/>
</dbReference>
<dbReference type="Gene3D" id="1.10.10.410">
    <property type="match status" value="1"/>
</dbReference>
<dbReference type="Gene3D" id="1.10.150.380">
    <property type="entry name" value="GatB domain, N-terminal subdomain"/>
    <property type="match status" value="1"/>
</dbReference>
<dbReference type="HAMAP" id="MF_00121">
    <property type="entry name" value="GatB"/>
    <property type="match status" value="1"/>
</dbReference>
<dbReference type="InterPro" id="IPR017959">
    <property type="entry name" value="Asn/Gln-tRNA_amidoTrfase_suB/E"/>
</dbReference>
<dbReference type="InterPro" id="IPR006075">
    <property type="entry name" value="Asn/Gln-tRNA_Trfase_suB/E_cat"/>
</dbReference>
<dbReference type="InterPro" id="IPR018027">
    <property type="entry name" value="Asn/Gln_amidotransferase"/>
</dbReference>
<dbReference type="InterPro" id="IPR003789">
    <property type="entry name" value="Asn/Gln_tRNA_amidoTrase-B-like"/>
</dbReference>
<dbReference type="InterPro" id="IPR004413">
    <property type="entry name" value="GatB"/>
</dbReference>
<dbReference type="InterPro" id="IPR042114">
    <property type="entry name" value="GatB_C_1"/>
</dbReference>
<dbReference type="InterPro" id="IPR023168">
    <property type="entry name" value="GatB_Yqey_C_2"/>
</dbReference>
<dbReference type="InterPro" id="IPR017958">
    <property type="entry name" value="Gln-tRNA_amidoTrfase_suB_CS"/>
</dbReference>
<dbReference type="InterPro" id="IPR014746">
    <property type="entry name" value="Gln_synth/guanido_kin_cat_dom"/>
</dbReference>
<dbReference type="NCBIfam" id="TIGR00133">
    <property type="entry name" value="gatB"/>
    <property type="match status" value="1"/>
</dbReference>
<dbReference type="NCBIfam" id="NF004011">
    <property type="entry name" value="PRK05477.1-1"/>
    <property type="match status" value="1"/>
</dbReference>
<dbReference type="NCBIfam" id="NF004012">
    <property type="entry name" value="PRK05477.1-2"/>
    <property type="match status" value="1"/>
</dbReference>
<dbReference type="NCBIfam" id="NF004014">
    <property type="entry name" value="PRK05477.1-4"/>
    <property type="match status" value="1"/>
</dbReference>
<dbReference type="PANTHER" id="PTHR11659">
    <property type="entry name" value="GLUTAMYL-TRNA GLN AMIDOTRANSFERASE SUBUNIT B MITOCHONDRIAL AND PROKARYOTIC PET112-RELATED"/>
    <property type="match status" value="1"/>
</dbReference>
<dbReference type="PANTHER" id="PTHR11659:SF0">
    <property type="entry name" value="GLUTAMYL-TRNA(GLN) AMIDOTRANSFERASE SUBUNIT B, MITOCHONDRIAL"/>
    <property type="match status" value="1"/>
</dbReference>
<dbReference type="Pfam" id="PF02934">
    <property type="entry name" value="GatB_N"/>
    <property type="match status" value="1"/>
</dbReference>
<dbReference type="Pfam" id="PF02637">
    <property type="entry name" value="GatB_Yqey"/>
    <property type="match status" value="1"/>
</dbReference>
<dbReference type="SMART" id="SM00845">
    <property type="entry name" value="GatB_Yqey"/>
    <property type="match status" value="1"/>
</dbReference>
<dbReference type="SUPFAM" id="SSF89095">
    <property type="entry name" value="GatB/YqeY motif"/>
    <property type="match status" value="1"/>
</dbReference>
<dbReference type="SUPFAM" id="SSF55931">
    <property type="entry name" value="Glutamine synthetase/guanido kinase"/>
    <property type="match status" value="1"/>
</dbReference>
<dbReference type="PROSITE" id="PS01234">
    <property type="entry name" value="GATB"/>
    <property type="match status" value="1"/>
</dbReference>
<sequence length="475" mass="53238">MNLETIIGLEVHVELKTNSKIFSASPTEFGAEPNTQTSVIDLGYPGVLPTLNKEAVNFAMKAAMALNCEIATETKFDRKNYFYPDNPKAYQISQFDKPIGENGWIEIEVDGKKKRIGITRLHLEEDAGKSTHTADGSLVDYNRQGMPLIEIVSEPDMRTPEEAYAYLEKLKSIIQYTGVSDCKMEEGSLRCDANISLRPVGQEKFGTKAELKNLNSFTYVQKGLEHEQVRQEKELLSGGIIQQETRRYDEATKKTILMRVKEGSDDYRYFPEPDLVELYIDDEWKEAVRASIPELPDARKARYVAELGLPAYDAHVLTLTKEMSDFFEATVADGADAKLTSNWLMGEVLAYLNKQQKELKDVALTPAGLSKMVQLIEKGTISSKIAKKVFNELIEKGGDPEEIVKAKGLVQISDEGTLRKVVTEILDNNEQSIEDFKNGKDRAIGFLVGQIMKATKGQANPPLVNKILLEEINKR</sequence>
<comment type="function">
    <text evidence="1">Allows the formation of correctly charged Asn-tRNA(Asn) or Gln-tRNA(Gln) through the transamidation of misacylated Asp-tRNA(Asn) or Glu-tRNA(Gln) in organisms which lack either or both of asparaginyl-tRNA or glutaminyl-tRNA synthetases. The reaction takes place in the presence of glutamine and ATP through an activated phospho-Asp-tRNA(Asn) or phospho-Glu-tRNA(Gln).</text>
</comment>
<comment type="catalytic activity">
    <reaction evidence="1">
        <text>L-glutamyl-tRNA(Gln) + L-glutamine + ATP + H2O = L-glutaminyl-tRNA(Gln) + L-glutamate + ADP + phosphate + H(+)</text>
        <dbReference type="Rhea" id="RHEA:17521"/>
        <dbReference type="Rhea" id="RHEA-COMP:9681"/>
        <dbReference type="Rhea" id="RHEA-COMP:9684"/>
        <dbReference type="ChEBI" id="CHEBI:15377"/>
        <dbReference type="ChEBI" id="CHEBI:15378"/>
        <dbReference type="ChEBI" id="CHEBI:29985"/>
        <dbReference type="ChEBI" id="CHEBI:30616"/>
        <dbReference type="ChEBI" id="CHEBI:43474"/>
        <dbReference type="ChEBI" id="CHEBI:58359"/>
        <dbReference type="ChEBI" id="CHEBI:78520"/>
        <dbReference type="ChEBI" id="CHEBI:78521"/>
        <dbReference type="ChEBI" id="CHEBI:456216"/>
    </reaction>
</comment>
<comment type="catalytic activity">
    <reaction evidence="1">
        <text>L-aspartyl-tRNA(Asn) + L-glutamine + ATP + H2O = L-asparaginyl-tRNA(Asn) + L-glutamate + ADP + phosphate + 2 H(+)</text>
        <dbReference type="Rhea" id="RHEA:14513"/>
        <dbReference type="Rhea" id="RHEA-COMP:9674"/>
        <dbReference type="Rhea" id="RHEA-COMP:9677"/>
        <dbReference type="ChEBI" id="CHEBI:15377"/>
        <dbReference type="ChEBI" id="CHEBI:15378"/>
        <dbReference type="ChEBI" id="CHEBI:29985"/>
        <dbReference type="ChEBI" id="CHEBI:30616"/>
        <dbReference type="ChEBI" id="CHEBI:43474"/>
        <dbReference type="ChEBI" id="CHEBI:58359"/>
        <dbReference type="ChEBI" id="CHEBI:78515"/>
        <dbReference type="ChEBI" id="CHEBI:78516"/>
        <dbReference type="ChEBI" id="CHEBI:456216"/>
    </reaction>
</comment>
<comment type="subunit">
    <text evidence="1">Heterotrimer of A, B and C subunits.</text>
</comment>
<comment type="similarity">
    <text evidence="1">Belongs to the GatB/GatE family. GatB subfamily.</text>
</comment>
<accession>Q81IN2</accession>
<evidence type="ECO:0000255" key="1">
    <source>
        <dbReference type="HAMAP-Rule" id="MF_00121"/>
    </source>
</evidence>
<protein>
    <recommendedName>
        <fullName evidence="1">Aspartyl/glutamyl-tRNA(Asn/Gln) amidotransferase subunit B</fullName>
        <shortName evidence="1">Asp/Glu-ADT subunit B</shortName>
        <ecNumber evidence="1">6.3.5.-</ecNumber>
    </recommendedName>
</protein>
<keyword id="KW-0067">ATP-binding</keyword>
<keyword id="KW-0436">Ligase</keyword>
<keyword id="KW-0547">Nucleotide-binding</keyword>
<keyword id="KW-0648">Protein biosynthesis</keyword>
<keyword id="KW-1185">Reference proteome</keyword>
<feature type="chain" id="PRO_0000148759" description="Aspartyl/glutamyl-tRNA(Asn/Gln) amidotransferase subunit B">
    <location>
        <begin position="1"/>
        <end position="475"/>
    </location>
</feature>